<accession>O48092</accession>
<keyword id="KW-0249">Electron transport</keyword>
<keyword id="KW-0349">Heme</keyword>
<keyword id="KW-0408">Iron</keyword>
<keyword id="KW-0472">Membrane</keyword>
<keyword id="KW-0479">Metal-binding</keyword>
<keyword id="KW-0496">Mitochondrion</keyword>
<keyword id="KW-0999">Mitochondrion inner membrane</keyword>
<keyword id="KW-0679">Respiratory chain</keyword>
<keyword id="KW-0812">Transmembrane</keyword>
<keyword id="KW-1133">Transmembrane helix</keyword>
<keyword id="KW-0813">Transport</keyword>
<keyword id="KW-0830">Ubiquinone</keyword>
<comment type="function">
    <text evidence="2">Component of the ubiquinol-cytochrome c reductase complex (complex III or cytochrome b-c1 complex) that is part of the mitochondrial respiratory chain. The b-c1 complex mediates electron transfer from ubiquinol to cytochrome c. Contributes to the generation of a proton gradient across the mitochondrial membrane that is then used for ATP synthesis.</text>
</comment>
<comment type="cofactor">
    <cofactor evidence="2">
        <name>heme b</name>
        <dbReference type="ChEBI" id="CHEBI:60344"/>
    </cofactor>
    <text evidence="2">Binds 2 heme b groups non-covalently.</text>
</comment>
<comment type="subunit">
    <text evidence="2">The cytochrome bc1 complex contains 3 respiratory subunits (MT-CYB, CYC1 and UQCRFS1), 2 core proteins (UQCRC1 and UQCRC2) and probably 6 low-molecular weight proteins.</text>
</comment>
<comment type="subcellular location">
    <subcellularLocation>
        <location evidence="2">Mitochondrion inner membrane</location>
        <topology evidence="2">Multi-pass membrane protein</topology>
    </subcellularLocation>
</comment>
<comment type="miscellaneous">
    <text evidence="1">Heme 1 (or BL or b562) is low-potential and absorbs at about 562 nm, and heme 2 (or BH or b566) is high-potential and absorbs at about 566 nm.</text>
</comment>
<comment type="similarity">
    <text evidence="3 4">Belongs to the cytochrome b family.</text>
</comment>
<comment type="caution">
    <text evidence="2">The full-length protein contains only eight transmembrane helices, not nine as predicted by bioinformatics tools.</text>
</comment>
<dbReference type="EMBL" id="U69837">
    <property type="protein sequence ID" value="AAC01871.1"/>
    <property type="molecule type" value="Genomic_DNA"/>
</dbReference>
<dbReference type="SMR" id="O48092"/>
<dbReference type="GO" id="GO:0005743">
    <property type="term" value="C:mitochondrial inner membrane"/>
    <property type="evidence" value="ECO:0007669"/>
    <property type="project" value="UniProtKB-SubCell"/>
</dbReference>
<dbReference type="GO" id="GO:0045275">
    <property type="term" value="C:respiratory chain complex III"/>
    <property type="evidence" value="ECO:0007669"/>
    <property type="project" value="InterPro"/>
</dbReference>
<dbReference type="GO" id="GO:0046872">
    <property type="term" value="F:metal ion binding"/>
    <property type="evidence" value="ECO:0007669"/>
    <property type="project" value="UniProtKB-KW"/>
</dbReference>
<dbReference type="GO" id="GO:0008121">
    <property type="term" value="F:ubiquinol-cytochrome-c reductase activity"/>
    <property type="evidence" value="ECO:0007669"/>
    <property type="project" value="InterPro"/>
</dbReference>
<dbReference type="GO" id="GO:0006122">
    <property type="term" value="P:mitochondrial electron transport, ubiquinol to cytochrome c"/>
    <property type="evidence" value="ECO:0007669"/>
    <property type="project" value="TreeGrafter"/>
</dbReference>
<dbReference type="CDD" id="cd00290">
    <property type="entry name" value="cytochrome_b_C"/>
    <property type="match status" value="1"/>
</dbReference>
<dbReference type="CDD" id="cd00284">
    <property type="entry name" value="Cytochrome_b_N"/>
    <property type="match status" value="1"/>
</dbReference>
<dbReference type="Gene3D" id="1.20.810.10">
    <property type="entry name" value="Cytochrome Bc1 Complex, Chain C"/>
    <property type="match status" value="1"/>
</dbReference>
<dbReference type="InterPro" id="IPR005798">
    <property type="entry name" value="Cyt_b/b6_C"/>
</dbReference>
<dbReference type="InterPro" id="IPR036150">
    <property type="entry name" value="Cyt_b/b6_C_sf"/>
</dbReference>
<dbReference type="InterPro" id="IPR005797">
    <property type="entry name" value="Cyt_b/b6_N"/>
</dbReference>
<dbReference type="InterPro" id="IPR027387">
    <property type="entry name" value="Cytb/b6-like_sf"/>
</dbReference>
<dbReference type="InterPro" id="IPR030689">
    <property type="entry name" value="Cytochrome_b"/>
</dbReference>
<dbReference type="InterPro" id="IPR048260">
    <property type="entry name" value="Cytochrome_b_C_euk/bac"/>
</dbReference>
<dbReference type="InterPro" id="IPR048259">
    <property type="entry name" value="Cytochrome_b_N_euk/bac"/>
</dbReference>
<dbReference type="InterPro" id="IPR016174">
    <property type="entry name" value="Di-haem_cyt_TM"/>
</dbReference>
<dbReference type="PANTHER" id="PTHR19271">
    <property type="entry name" value="CYTOCHROME B"/>
    <property type="match status" value="1"/>
</dbReference>
<dbReference type="PANTHER" id="PTHR19271:SF16">
    <property type="entry name" value="CYTOCHROME B"/>
    <property type="match status" value="1"/>
</dbReference>
<dbReference type="Pfam" id="PF00032">
    <property type="entry name" value="Cytochrom_B_C"/>
    <property type="match status" value="1"/>
</dbReference>
<dbReference type="Pfam" id="PF00033">
    <property type="entry name" value="Cytochrome_B"/>
    <property type="match status" value="1"/>
</dbReference>
<dbReference type="PIRSF" id="PIRSF038885">
    <property type="entry name" value="COB"/>
    <property type="match status" value="1"/>
</dbReference>
<dbReference type="SUPFAM" id="SSF81648">
    <property type="entry name" value="a domain/subunit of cytochrome bc1 complex (Ubiquinol-cytochrome c reductase)"/>
    <property type="match status" value="1"/>
</dbReference>
<dbReference type="SUPFAM" id="SSF81342">
    <property type="entry name" value="Transmembrane di-heme cytochromes"/>
    <property type="match status" value="1"/>
</dbReference>
<dbReference type="PROSITE" id="PS51003">
    <property type="entry name" value="CYTB_CTER"/>
    <property type="match status" value="1"/>
</dbReference>
<dbReference type="PROSITE" id="PS51002">
    <property type="entry name" value="CYTB_NTER"/>
    <property type="match status" value="1"/>
</dbReference>
<organism>
    <name type="scientific">Antaresia childreni</name>
    <name type="common">Children's python</name>
    <name type="synonym">Liasis childreni</name>
    <dbReference type="NCBI Taxonomy" id="51888"/>
    <lineage>
        <taxon>Eukaryota</taxon>
        <taxon>Metazoa</taxon>
        <taxon>Chordata</taxon>
        <taxon>Craniata</taxon>
        <taxon>Vertebrata</taxon>
        <taxon>Euteleostomi</taxon>
        <taxon>Lepidosauria</taxon>
        <taxon>Squamata</taxon>
        <taxon>Bifurcata</taxon>
        <taxon>Unidentata</taxon>
        <taxon>Episquamata</taxon>
        <taxon>Toxicofera</taxon>
        <taxon>Serpentes</taxon>
        <taxon>Henophidia</taxon>
        <taxon>Pythonidae</taxon>
        <taxon>Antaresia</taxon>
    </lineage>
</organism>
<geneLocation type="mitochondrion"/>
<feature type="chain" id="PRO_0000061119" description="Cytochrome b">
    <location>
        <begin position="1"/>
        <end position="371"/>
    </location>
</feature>
<feature type="transmembrane region" description="Helical" evidence="2">
    <location>
        <begin position="25"/>
        <end position="45"/>
    </location>
</feature>
<feature type="transmembrane region" description="Helical" evidence="2">
    <location>
        <begin position="69"/>
        <end position="90"/>
    </location>
</feature>
<feature type="transmembrane region" description="Helical" evidence="2">
    <location>
        <begin position="105"/>
        <end position="125"/>
    </location>
</feature>
<feature type="transmembrane region" description="Helical" evidence="2">
    <location>
        <begin position="170"/>
        <end position="190"/>
    </location>
</feature>
<feature type="transmembrane region" description="Helical" evidence="2">
    <location>
        <begin position="218"/>
        <end position="238"/>
    </location>
</feature>
<feature type="transmembrane region" description="Helical" evidence="2">
    <location>
        <begin position="280"/>
        <end position="300"/>
    </location>
</feature>
<feature type="transmembrane region" description="Helical" evidence="2">
    <location>
        <begin position="312"/>
        <end position="332"/>
    </location>
</feature>
<feature type="transmembrane region" description="Helical" evidence="2">
    <location>
        <begin position="339"/>
        <end position="358"/>
    </location>
</feature>
<feature type="binding site" description="axial binding residue" evidence="2">
    <location>
        <position position="75"/>
    </location>
    <ligand>
        <name>heme b</name>
        <dbReference type="ChEBI" id="CHEBI:60344"/>
        <label>b562</label>
    </ligand>
    <ligandPart>
        <name>Fe</name>
        <dbReference type="ChEBI" id="CHEBI:18248"/>
    </ligandPart>
</feature>
<feature type="binding site" description="axial binding residue" evidence="2">
    <location>
        <position position="89"/>
    </location>
    <ligand>
        <name>heme b</name>
        <dbReference type="ChEBI" id="CHEBI:60344"/>
        <label>b566</label>
    </ligand>
    <ligandPart>
        <name>Fe</name>
        <dbReference type="ChEBI" id="CHEBI:18248"/>
    </ligandPart>
</feature>
<feature type="binding site" description="axial binding residue" evidence="2">
    <location>
        <position position="174"/>
    </location>
    <ligand>
        <name>heme b</name>
        <dbReference type="ChEBI" id="CHEBI:60344"/>
        <label>b562</label>
    </ligand>
    <ligandPart>
        <name>Fe</name>
        <dbReference type="ChEBI" id="CHEBI:18248"/>
    </ligandPart>
</feature>
<feature type="binding site" description="axial binding residue" evidence="2">
    <location>
        <position position="188"/>
    </location>
    <ligand>
        <name>heme b</name>
        <dbReference type="ChEBI" id="CHEBI:60344"/>
        <label>b566</label>
    </ligand>
    <ligandPart>
        <name>Fe</name>
        <dbReference type="ChEBI" id="CHEBI:18248"/>
    </ligandPart>
</feature>
<feature type="binding site" evidence="2">
    <location>
        <position position="193"/>
    </location>
    <ligand>
        <name>a ubiquinone</name>
        <dbReference type="ChEBI" id="CHEBI:16389"/>
    </ligand>
</feature>
<gene>
    <name type="primary">MT-CYB</name>
    <name type="synonym">COB</name>
    <name type="synonym">CYTB</name>
    <name type="synonym">MTCYB</name>
</gene>
<name>CYB_ANTCH</name>
<sequence length="371" mass="41969">MPHHYILTLFGLLPVATNISTWWNFGSMLLTCLALQVLTGFFLAVHYTANINLAFSSIVHITRDVPYGWMMQNLHAIGASMFFICIYIHIARGLYYGSYLNKETWMSGITLLITLMATAFFGYVLPWGQMSFWAATVITNLLTAVPYLGTSLTTWLWGGFAINDPTLTRFFALHFILPFAIISLSSLHIILLHEEGSSNPLGTNPDIDKIPFHPYHTHKDLLLLTLMILLLLIIVSFSPDIFHDPDNFSKANPLVTPQHIKPELYFLFAYGILRSIPNKLGGALALVMSIMILFTIPFTHTAHLRPMTFRPLSQLMFWALISTFVTITWAATKPVEPPFIIISQVTSTLYFTFFLSIPILGWVENKMMNIS</sequence>
<proteinExistence type="inferred from homology"/>
<reference key="1">
    <citation type="thesis" date="1997" institute="Queen's University / Kingston" country="Canada">
        <title>Hic Sunt Serpentes -- molecular phylogenetics and the Boidae (Serpentes: Booidea).</title>
        <authorList>
            <person name="Campbell B.N."/>
        </authorList>
    </citation>
    <scope>NUCLEOTIDE SEQUENCE [GENOMIC DNA]</scope>
</reference>
<evidence type="ECO:0000250" key="1"/>
<evidence type="ECO:0000250" key="2">
    <source>
        <dbReference type="UniProtKB" id="P00157"/>
    </source>
</evidence>
<evidence type="ECO:0000255" key="3">
    <source>
        <dbReference type="PROSITE-ProRule" id="PRU00967"/>
    </source>
</evidence>
<evidence type="ECO:0000255" key="4">
    <source>
        <dbReference type="PROSITE-ProRule" id="PRU00968"/>
    </source>
</evidence>
<protein>
    <recommendedName>
        <fullName>Cytochrome b</fullName>
    </recommendedName>
    <alternativeName>
        <fullName>Complex III subunit 3</fullName>
    </alternativeName>
    <alternativeName>
        <fullName>Complex III subunit III</fullName>
    </alternativeName>
    <alternativeName>
        <fullName>Cytochrome b-c1 complex subunit 3</fullName>
    </alternativeName>
    <alternativeName>
        <fullName>Ubiquinol-cytochrome-c reductase complex cytochrome b subunit</fullName>
    </alternativeName>
</protein>